<name>COW2_CONLT</name>
<sequence length="63" mass="6682">MGKLTILVIVAAALLSTQFMVQGDGDQPADRDAVPSDDNPGGTSEKFMNVQHGSGCPWYPWCG</sequence>
<comment type="function">
    <text evidence="1 2 5 6">Its target is unknown, but this toxin may modulate voltage-activated calcium channels (Cav) or calcium-dependent potassium channels (KCa).</text>
</comment>
<comment type="subcellular location">
    <subcellularLocation>
        <location evidence="10">Secreted</location>
    </subcellularLocation>
</comment>
<comment type="tissue specificity">
    <text evidence="10">Expressed by the venom duct.</text>
</comment>
<comment type="domain">
    <text evidence="9">The cysteine framework is C-C.</text>
</comment>
<comment type="miscellaneous">
    <text evidence="4">Exists in two forms, due to cis-trans isomerization at 56-Cys-hydroxyPro-57. The cis conformation is the major form.</text>
</comment>
<comment type="similarity">
    <text evidence="9">Belongs to the O2 superfamily. Contryphan family.</text>
</comment>
<protein>
    <recommendedName>
        <fullName evidence="9">Contryphan-Lt2</fullName>
    </recommendedName>
</protein>
<reference key="1">
    <citation type="journal article" date="2017" name="J. Proteome Res.">
        <title>Contryphan genes and mature peptides in the venom of nine cone snail species by transcriptomic and mass spectrometric analysis.</title>
        <authorList>
            <person name="Vijayasarathy M."/>
            <person name="Basheer S.M."/>
            <person name="Franklin J.B."/>
            <person name="Balaram P."/>
        </authorList>
    </citation>
    <scope>NUCLEOTIDE SEQUENCE [MRNA]</scope>
    <source>
        <tissue>Venom duct</tissue>
    </source>
</reference>
<accession>A0A1P8NVS8</accession>
<organism>
    <name type="scientific">Conus litteratus</name>
    <name type="common">Lettered cone</name>
    <dbReference type="NCBI Taxonomy" id="89445"/>
    <lineage>
        <taxon>Eukaryota</taxon>
        <taxon>Metazoa</taxon>
        <taxon>Spiralia</taxon>
        <taxon>Lophotrochozoa</taxon>
        <taxon>Mollusca</taxon>
        <taxon>Gastropoda</taxon>
        <taxon>Caenogastropoda</taxon>
        <taxon>Neogastropoda</taxon>
        <taxon>Conoidea</taxon>
        <taxon>Conidae</taxon>
        <taxon>Conus</taxon>
        <taxon>Elisaconus</taxon>
    </lineage>
</organism>
<keyword id="KW-0027">Amidation</keyword>
<keyword id="KW-0208">D-amino acid</keyword>
<keyword id="KW-1015">Disulfide bond</keyword>
<keyword id="KW-0379">Hydroxylation</keyword>
<keyword id="KW-0872">Ion channel impairing toxin</keyword>
<keyword id="KW-0528">Neurotoxin</keyword>
<keyword id="KW-0964">Secreted</keyword>
<keyword id="KW-0732">Signal</keyword>
<keyword id="KW-0800">Toxin</keyword>
<feature type="signal peptide" evidence="7">
    <location>
        <begin position="1"/>
        <end position="23"/>
    </location>
</feature>
<feature type="propeptide" id="PRO_0000445133" evidence="9">
    <location>
        <begin position="24"/>
        <end position="54"/>
    </location>
</feature>
<feature type="peptide" id="PRO_5012591470" description="Contryphan-Lt2" evidence="9">
    <location>
        <begin position="55"/>
        <end position="62"/>
    </location>
</feature>
<feature type="region of interest" description="Disordered" evidence="8">
    <location>
        <begin position="22"/>
        <end position="47"/>
    </location>
</feature>
<feature type="modified residue" description="4-hydroxyproline" evidence="3">
    <location>
        <position position="57"/>
    </location>
</feature>
<feature type="modified residue" description="D-tryptophan" evidence="3">
    <location>
        <position position="58"/>
    </location>
</feature>
<feature type="modified residue" description="Cysteine amide" evidence="3">
    <location>
        <position position="62"/>
    </location>
</feature>
<feature type="disulfide bond" evidence="3">
    <location>
        <begin position="56"/>
        <end position="62"/>
    </location>
</feature>
<evidence type="ECO:0000250" key="1">
    <source>
        <dbReference type="UniProtKB" id="P0C248"/>
    </source>
</evidence>
<evidence type="ECO:0000250" key="2">
    <source>
        <dbReference type="UniProtKB" id="P0C250"/>
    </source>
</evidence>
<evidence type="ECO:0000250" key="3">
    <source>
        <dbReference type="UniProtKB" id="P58786"/>
    </source>
</evidence>
<evidence type="ECO:0000250" key="4">
    <source>
        <dbReference type="UniProtKB" id="P58787"/>
    </source>
</evidence>
<evidence type="ECO:0000250" key="5">
    <source>
        <dbReference type="UniProtKB" id="P62903"/>
    </source>
</evidence>
<evidence type="ECO:0000250" key="6">
    <source>
        <dbReference type="UniProtKB" id="P83047"/>
    </source>
</evidence>
<evidence type="ECO:0000255" key="7"/>
<evidence type="ECO:0000256" key="8">
    <source>
        <dbReference type="SAM" id="MobiDB-lite"/>
    </source>
</evidence>
<evidence type="ECO:0000305" key="9"/>
<evidence type="ECO:0000305" key="10">
    <source>
    </source>
</evidence>
<dbReference type="EMBL" id="KX289882">
    <property type="protein sequence ID" value="APX52859.1"/>
    <property type="molecule type" value="mRNA"/>
</dbReference>
<dbReference type="ConoServer" id="9761">
    <property type="toxin name" value="Contryphan-Lt2 precursor"/>
</dbReference>
<dbReference type="GO" id="GO:0005576">
    <property type="term" value="C:extracellular region"/>
    <property type="evidence" value="ECO:0007669"/>
    <property type="project" value="UniProtKB-SubCell"/>
</dbReference>
<dbReference type="GO" id="GO:0008200">
    <property type="term" value="F:ion channel inhibitor activity"/>
    <property type="evidence" value="ECO:0007669"/>
    <property type="project" value="InterPro"/>
</dbReference>
<dbReference type="GO" id="GO:0090729">
    <property type="term" value="F:toxin activity"/>
    <property type="evidence" value="ECO:0007669"/>
    <property type="project" value="UniProtKB-KW"/>
</dbReference>
<dbReference type="InterPro" id="IPR004214">
    <property type="entry name" value="Conotoxin"/>
</dbReference>
<dbReference type="InterPro" id="IPR011062">
    <property type="entry name" value="Contryphan_CS"/>
</dbReference>
<dbReference type="Pfam" id="PF02950">
    <property type="entry name" value="Conotoxin"/>
    <property type="match status" value="1"/>
</dbReference>
<dbReference type="PROSITE" id="PS60027">
    <property type="entry name" value="CONTRYPHAN"/>
    <property type="match status" value="1"/>
</dbReference>
<proteinExistence type="inferred from homology"/>